<feature type="chain" id="PRO_1000148552" description="Ribosome biogenesis protein Nop10">
    <location>
        <begin position="1"/>
        <end position="51"/>
    </location>
</feature>
<accession>A9A115</accession>
<proteinExistence type="inferred from homology"/>
<gene>
    <name evidence="1" type="primary">nop10</name>
    <name type="ordered locus">Nmar_0076</name>
</gene>
<dbReference type="EMBL" id="CP000866">
    <property type="protein sequence ID" value="ABX11976.1"/>
    <property type="molecule type" value="Genomic_DNA"/>
</dbReference>
<dbReference type="RefSeq" id="WP_012214463.1">
    <property type="nucleotide sequence ID" value="NC_010085.1"/>
</dbReference>
<dbReference type="SMR" id="A9A115"/>
<dbReference type="FunCoup" id="A9A115">
    <property type="interactions" value="99"/>
</dbReference>
<dbReference type="STRING" id="436308.Nmar_0076"/>
<dbReference type="EnsemblBacteria" id="ABX11976">
    <property type="protein sequence ID" value="ABX11976"/>
    <property type="gene ID" value="Nmar_0076"/>
</dbReference>
<dbReference type="GeneID" id="5773488"/>
<dbReference type="KEGG" id="nmr:Nmar_0076"/>
<dbReference type="eggNOG" id="arCOG00906">
    <property type="taxonomic scope" value="Archaea"/>
</dbReference>
<dbReference type="HOGENOM" id="CLU_196480_1_0_2"/>
<dbReference type="InParanoid" id="A9A115"/>
<dbReference type="OrthoDB" id="7259at2157"/>
<dbReference type="PhylomeDB" id="A9A115"/>
<dbReference type="Proteomes" id="UP000000792">
    <property type="component" value="Chromosome"/>
</dbReference>
<dbReference type="GO" id="GO:1990904">
    <property type="term" value="C:ribonucleoprotein complex"/>
    <property type="evidence" value="ECO:0007669"/>
    <property type="project" value="UniProtKB-KW"/>
</dbReference>
<dbReference type="GO" id="GO:0030515">
    <property type="term" value="F:snoRNA binding"/>
    <property type="evidence" value="ECO:0007669"/>
    <property type="project" value="InterPro"/>
</dbReference>
<dbReference type="GO" id="GO:0001522">
    <property type="term" value="P:pseudouridine synthesis"/>
    <property type="evidence" value="ECO:0007669"/>
    <property type="project" value="InterPro"/>
</dbReference>
<dbReference type="GO" id="GO:0006364">
    <property type="term" value="P:rRNA processing"/>
    <property type="evidence" value="ECO:0007669"/>
    <property type="project" value="UniProtKB-UniRule"/>
</dbReference>
<dbReference type="Gene3D" id="2.20.28.40">
    <property type="entry name" value="H/ACA ribonucleoprotein complex, subunit Nop10"/>
    <property type="match status" value="1"/>
</dbReference>
<dbReference type="HAMAP" id="MF_00803">
    <property type="entry name" value="Nop10"/>
    <property type="match status" value="1"/>
</dbReference>
<dbReference type="InterPro" id="IPR007264">
    <property type="entry name" value="H/ACA_rnp_Nop10"/>
</dbReference>
<dbReference type="InterPro" id="IPR036756">
    <property type="entry name" value="H/ACA_rnp_Nop10_sf"/>
</dbReference>
<dbReference type="InterPro" id="IPR023532">
    <property type="entry name" value="Nop10_arc-typ"/>
</dbReference>
<dbReference type="NCBIfam" id="NF009623">
    <property type="entry name" value="PRK13130.1"/>
    <property type="match status" value="1"/>
</dbReference>
<dbReference type="PANTHER" id="PTHR13305:SF0">
    <property type="entry name" value="H_ACA RIBONUCLEOPROTEIN COMPLEX SUBUNIT 3"/>
    <property type="match status" value="1"/>
</dbReference>
<dbReference type="PANTHER" id="PTHR13305">
    <property type="entry name" value="RIBOSOME BIOGENESIS PROTEIN NOP10"/>
    <property type="match status" value="1"/>
</dbReference>
<dbReference type="Pfam" id="PF04135">
    <property type="entry name" value="Nop10p"/>
    <property type="match status" value="1"/>
</dbReference>
<dbReference type="SUPFAM" id="SSF144210">
    <property type="entry name" value="Nop10-like SnoRNP"/>
    <property type="match status" value="1"/>
</dbReference>
<evidence type="ECO:0000255" key="1">
    <source>
        <dbReference type="HAMAP-Rule" id="MF_00803"/>
    </source>
</evidence>
<name>NOP10_NITMS</name>
<reference key="1">
    <citation type="journal article" date="2010" name="Proc. Natl. Acad. Sci. U.S.A.">
        <title>Nitrosopumilus maritimus genome reveals unique mechanisms for nitrification and autotrophy in globally distributed marine crenarchaea.</title>
        <authorList>
            <person name="Walker C.B."/>
            <person name="de la Torre J.R."/>
            <person name="Klotz M.G."/>
            <person name="Urakawa H."/>
            <person name="Pinel N."/>
            <person name="Arp D.J."/>
            <person name="Brochier-Armanet C."/>
            <person name="Chain P.S."/>
            <person name="Chan P.P."/>
            <person name="Gollabgir A."/>
            <person name="Hemp J."/>
            <person name="Hugler M."/>
            <person name="Karr E.A."/>
            <person name="Konneke M."/>
            <person name="Shin M."/>
            <person name="Lawton T.J."/>
            <person name="Lowe T."/>
            <person name="Martens-Habbena W."/>
            <person name="Sayavedra-Soto L.A."/>
            <person name="Lang D."/>
            <person name="Sievert S.M."/>
            <person name="Rosenzweig A.C."/>
            <person name="Manning G."/>
            <person name="Stahl D.A."/>
        </authorList>
    </citation>
    <scope>NUCLEOTIDE SEQUENCE [LARGE SCALE GENOMIC DNA]</scope>
    <source>
        <strain>SCM1</strain>
    </source>
</reference>
<organism>
    <name type="scientific">Nitrosopumilus maritimus (strain SCM1)</name>
    <dbReference type="NCBI Taxonomy" id="436308"/>
    <lineage>
        <taxon>Archaea</taxon>
        <taxon>Nitrososphaerota</taxon>
        <taxon>Nitrososphaeria</taxon>
        <taxon>Nitrosopumilales</taxon>
        <taxon>Nitrosopumilaceae</taxon>
        <taxon>Nitrosopumilus</taxon>
    </lineage>
</organism>
<comment type="function">
    <text evidence="1">Involved in ribosome biogenesis; more specifically in 18S rRNA pseudouridylation and in cleavage of pre-rRNA.</text>
</comment>
<comment type="similarity">
    <text evidence="1">Belongs to the NOP10 family.</text>
</comment>
<sequence>MRFQLRKCSKCFQYTLKEICPKCKEQTISAHPAKFSPDDKYMRYRLAERYN</sequence>
<keyword id="KW-1185">Reference proteome</keyword>
<keyword id="KW-0687">Ribonucleoprotein</keyword>
<keyword id="KW-0690">Ribosome biogenesis</keyword>
<keyword id="KW-0698">rRNA processing</keyword>
<protein>
    <recommendedName>
        <fullName evidence="1">Ribosome biogenesis protein Nop10</fullName>
    </recommendedName>
</protein>